<feature type="chain" id="PRO_0000308399" description="Polyprotein P1234">
    <location>
        <begin position="1"/>
        <end position="2513"/>
    </location>
</feature>
<feature type="chain" id="PRO_0000229938" description="Polyprotein P123'">
    <location>
        <begin position="1"/>
        <end position="1902"/>
    </location>
</feature>
<feature type="chain" id="PRO_0000446650" description="Polyprotein P123">
    <location>
        <begin position="1"/>
        <end position="1895"/>
    </location>
</feature>
<feature type="chain" id="PRO_0000229939" description="mRNA-capping enzyme nsP1">
    <location>
        <begin position="1"/>
        <end position="535"/>
    </location>
</feature>
<feature type="chain" id="PRO_0000229940" description="Protease nsP2">
    <location>
        <begin position="536"/>
        <end position="1333"/>
    </location>
</feature>
<feature type="chain" id="PRO_0000229941" description="Non-structural protein 3'">
    <location>
        <begin position="1334"/>
        <end position="1902"/>
    </location>
</feature>
<feature type="chain" id="PRO_0000446651" description="Non-structural protein 3">
    <location>
        <begin position="1334"/>
        <end position="1895"/>
    </location>
</feature>
<feature type="chain" id="PRO_0000229942" description="RNA-directed RNA polymerase nsP4">
    <location>
        <begin position="1903"/>
        <end position="2513"/>
    </location>
</feature>
<feature type="domain" description="Alphavirus-like MT" evidence="9">
    <location>
        <begin position="28"/>
        <end position="259"/>
    </location>
</feature>
<feature type="domain" description="(+)RNA virus helicase ATP-binding" evidence="8">
    <location>
        <begin position="690"/>
        <end position="842"/>
    </location>
</feature>
<feature type="domain" description="(+)RNA virus helicase C-terminal" evidence="8">
    <location>
        <begin position="843"/>
        <end position="991"/>
    </location>
</feature>
<feature type="domain" description="Peptidase C9" evidence="7">
    <location>
        <begin position="1004"/>
        <end position="1327"/>
    </location>
</feature>
<feature type="domain" description="RdRp catalytic" evidence="6">
    <location>
        <begin position="2267"/>
        <end position="2382"/>
    </location>
</feature>
<feature type="region of interest" description="NsP1 membrane-binding" evidence="2">
    <location>
        <begin position="244"/>
        <end position="263"/>
    </location>
</feature>
<feature type="region of interest" description="Nucleolus localization signal" evidence="2">
    <location>
        <begin position="1005"/>
        <end position="1024"/>
    </location>
</feature>
<feature type="short sequence motif" description="Nuclear export signal" evidence="3">
    <location>
        <begin position="1058"/>
        <end position="1067"/>
    </location>
</feature>
<feature type="short sequence motif" description="Nuclear localization signal" evidence="2">
    <location>
        <begin position="1182"/>
        <end position="1186"/>
    </location>
</feature>
<feature type="short sequence motif" description="FGDF; binding to host G3BP1" evidence="2">
    <location>
        <begin position="1851"/>
        <end position="1854"/>
    </location>
</feature>
<feature type="short sequence motif" description="FGDF; binding to host G3BP1" evidence="2">
    <location>
        <begin position="1869"/>
        <end position="1872"/>
    </location>
</feature>
<feature type="active site" description="For cysteine protease nsP2 activity" evidence="7">
    <location>
        <position position="1013"/>
    </location>
</feature>
<feature type="active site" description="For cysteine protease nsP2 activity" evidence="7">
    <location>
        <position position="1083"/>
    </location>
</feature>
<feature type="binding site" evidence="8">
    <location>
        <begin position="721"/>
        <end position="728"/>
    </location>
    <ligand>
        <name>a ribonucleoside 5'-triphosphate</name>
        <dbReference type="ChEBI" id="CHEBI:61557"/>
    </ligand>
</feature>
<feature type="binding site" evidence="4">
    <location>
        <position position="1343"/>
    </location>
    <ligand>
        <name>ADP-D-ribose</name>
        <dbReference type="ChEBI" id="CHEBI:57967"/>
    </ligand>
</feature>
<feature type="binding site" evidence="5">
    <location>
        <position position="1357"/>
    </location>
    <ligand>
        <name>ADP-D-ribose</name>
        <dbReference type="ChEBI" id="CHEBI:57967"/>
    </ligand>
</feature>
<feature type="binding site" evidence="5">
    <location>
        <position position="1365"/>
    </location>
    <ligand>
        <name>ADP-D-ribose</name>
        <dbReference type="ChEBI" id="CHEBI:57967"/>
    </ligand>
</feature>
<feature type="binding site" evidence="4">
    <location>
        <position position="1445"/>
    </location>
    <ligand>
        <name>ADP-D-ribose</name>
        <dbReference type="ChEBI" id="CHEBI:57967"/>
    </ligand>
</feature>
<feature type="binding site" evidence="5">
    <location>
        <position position="1446"/>
    </location>
    <ligand>
        <name>ADP-D-ribose</name>
        <dbReference type="ChEBI" id="CHEBI:57967"/>
    </ligand>
</feature>
<feature type="binding site" evidence="5">
    <location>
        <position position="1447"/>
    </location>
    <ligand>
        <name>ADP-D-ribose</name>
        <dbReference type="ChEBI" id="CHEBI:57967"/>
    </ligand>
</feature>
<feature type="binding site" evidence="1">
    <location>
        <position position="1595"/>
    </location>
    <ligand>
        <name>Zn(2+)</name>
        <dbReference type="ChEBI" id="CHEBI:29105"/>
    </ligand>
</feature>
<feature type="binding site" evidence="1">
    <location>
        <position position="1597"/>
    </location>
    <ligand>
        <name>Zn(2+)</name>
        <dbReference type="ChEBI" id="CHEBI:29105"/>
    </ligand>
</feature>
<feature type="binding site" evidence="1">
    <location>
        <position position="1620"/>
    </location>
    <ligand>
        <name>Zn(2+)</name>
        <dbReference type="ChEBI" id="CHEBI:29105"/>
    </ligand>
</feature>
<feature type="binding site" evidence="1">
    <location>
        <position position="1638"/>
    </location>
    <ligand>
        <name>Zn(2+)</name>
        <dbReference type="ChEBI" id="CHEBI:29105"/>
    </ligand>
</feature>
<feature type="site" description="Involved in the phosphoramide link with 7-methyl-GMP" evidence="3">
    <location>
        <position position="37"/>
    </location>
</feature>
<feature type="site" description="Cleavage; by protease nsP2" evidence="1">
    <location>
        <begin position="535"/>
        <end position="536"/>
    </location>
</feature>
<feature type="site" description="Cleavage; by protease nsP2" evidence="1">
    <location>
        <begin position="1333"/>
        <end position="1334"/>
    </location>
</feature>
<feature type="site" description="Cleavage; by protease nsP2" evidence="5">
    <location>
        <begin position="1902"/>
        <end position="1903"/>
    </location>
</feature>
<feature type="lipid moiety-binding region" description="S-palmitoyl cysteine; by host" evidence="5">
    <location>
        <position position="417"/>
    </location>
</feature>
<feature type="lipid moiety-binding region" description="S-palmitoyl cysteine; by host" evidence="5">
    <location>
        <position position="419"/>
    </location>
</feature>
<feature type="strand" evidence="13">
    <location>
        <begin position="1920"/>
        <end position="1926"/>
    </location>
</feature>
<feature type="strand" evidence="13">
    <location>
        <begin position="1928"/>
        <end position="1931"/>
    </location>
</feature>
<feature type="helix" evidence="13">
    <location>
        <begin position="1945"/>
        <end position="1956"/>
    </location>
</feature>
<feature type="helix" evidence="13">
    <location>
        <begin position="1961"/>
        <end position="1985"/>
    </location>
</feature>
<feature type="turn" evidence="13">
    <location>
        <begin position="1986"/>
        <end position="1989"/>
    </location>
</feature>
<feature type="strand" evidence="13">
    <location>
        <begin position="2000"/>
        <end position="2005"/>
    </location>
</feature>
<feature type="helix" evidence="13">
    <location>
        <begin position="2020"/>
        <end position="2034"/>
    </location>
</feature>
<feature type="helix" evidence="13">
    <location>
        <begin position="2038"/>
        <end position="2040"/>
    </location>
</feature>
<feature type="helix" evidence="13">
    <location>
        <begin position="2048"/>
        <end position="2054"/>
    </location>
</feature>
<feature type="strand" evidence="13">
    <location>
        <begin position="2057"/>
        <end position="2059"/>
    </location>
</feature>
<feature type="strand" evidence="13">
    <location>
        <begin position="2062"/>
        <end position="2066"/>
    </location>
</feature>
<feature type="helix" evidence="13">
    <location>
        <begin position="2068"/>
        <end position="2070"/>
    </location>
</feature>
<feature type="strand" evidence="13">
    <location>
        <begin position="2078"/>
        <end position="2081"/>
    </location>
</feature>
<feature type="helix" evidence="13">
    <location>
        <begin position="2097"/>
        <end position="2103"/>
    </location>
</feature>
<feature type="strand" evidence="13">
    <location>
        <begin position="2114"/>
        <end position="2116"/>
    </location>
</feature>
<feature type="helix" evidence="13">
    <location>
        <begin position="2117"/>
        <end position="2133"/>
    </location>
</feature>
<feature type="strand" evidence="13">
    <location>
        <begin position="2137"/>
        <end position="2139"/>
    </location>
</feature>
<feature type="helix" evidence="13">
    <location>
        <begin position="2140"/>
        <end position="2145"/>
    </location>
</feature>
<feature type="helix" evidence="13">
    <location>
        <begin position="2152"/>
        <end position="2160"/>
    </location>
</feature>
<feature type="helix" evidence="13">
    <location>
        <begin position="2164"/>
        <end position="2171"/>
    </location>
</feature>
<feature type="helix" evidence="13">
    <location>
        <begin position="2180"/>
        <end position="2182"/>
    </location>
</feature>
<feature type="strand" evidence="13">
    <location>
        <begin position="2185"/>
        <end position="2191"/>
    </location>
</feature>
<feature type="strand" evidence="13">
    <location>
        <begin position="2200"/>
        <end position="2202"/>
    </location>
</feature>
<feature type="turn" evidence="13">
    <location>
        <begin position="2204"/>
        <end position="2206"/>
    </location>
</feature>
<feature type="strand" evidence="13">
    <location>
        <begin position="2214"/>
        <end position="2216"/>
    </location>
</feature>
<feature type="helix" evidence="13">
    <location>
        <begin position="2221"/>
        <end position="2224"/>
    </location>
</feature>
<feature type="helix" evidence="13">
    <location>
        <begin position="2229"/>
        <end position="2239"/>
    </location>
</feature>
<feature type="strand" evidence="13">
    <location>
        <begin position="2244"/>
        <end position="2246"/>
    </location>
</feature>
<feature type="helix" evidence="13">
    <location>
        <begin position="2252"/>
        <end position="2258"/>
    </location>
</feature>
<feature type="turn" evidence="13">
    <location>
        <begin position="2259"/>
        <end position="2262"/>
    </location>
</feature>
<feature type="strand" evidence="13">
    <location>
        <begin position="2268"/>
        <end position="2273"/>
    </location>
</feature>
<feature type="helix" evidence="13">
    <location>
        <begin position="2284"/>
        <end position="2296"/>
    </location>
</feature>
<feature type="helix" evidence="13">
    <location>
        <begin position="2300"/>
        <end position="2307"/>
    </location>
</feature>
<feature type="helix" evidence="13">
    <location>
        <begin position="2308"/>
        <end position="2310"/>
    </location>
</feature>
<feature type="strand" evidence="13">
    <location>
        <begin position="2313"/>
        <end position="2317"/>
    </location>
</feature>
<feature type="turn" evidence="13">
    <location>
        <begin position="2318"/>
        <end position="2321"/>
    </location>
</feature>
<feature type="strand" evidence="13">
    <location>
        <begin position="2322"/>
        <end position="2326"/>
    </location>
</feature>
<feature type="strand" evidence="13">
    <location>
        <begin position="2333"/>
        <end position="2335"/>
    </location>
</feature>
<feature type="helix" evidence="13">
    <location>
        <begin position="2338"/>
        <end position="2353"/>
    </location>
</feature>
<feature type="helix" evidence="13">
    <location>
        <begin position="2354"/>
        <end position="2356"/>
    </location>
</feature>
<feature type="strand" evidence="13">
    <location>
        <begin position="2363"/>
        <end position="2366"/>
    </location>
</feature>
<feature type="strand" evidence="13">
    <location>
        <begin position="2369"/>
        <end position="2373"/>
    </location>
</feature>
<feature type="helix" evidence="13">
    <location>
        <begin position="2379"/>
        <end position="2385"/>
    </location>
</feature>
<feature type="turn" evidence="13">
    <location>
        <begin position="2386"/>
        <end position="2388"/>
    </location>
</feature>
<feature type="strand" evidence="13">
    <location>
        <begin position="2394"/>
        <end position="2399"/>
    </location>
</feature>
<feature type="turn" evidence="13">
    <location>
        <begin position="2400"/>
        <end position="2402"/>
    </location>
</feature>
<feature type="strand" evidence="13">
    <location>
        <begin position="2408"/>
        <end position="2414"/>
    </location>
</feature>
<feature type="strand" evidence="13">
    <location>
        <begin position="2416"/>
        <end position="2418"/>
    </location>
</feature>
<feature type="strand" evidence="13">
    <location>
        <begin position="2421"/>
        <end position="2425"/>
    </location>
</feature>
<feature type="helix" evidence="13">
    <location>
        <begin position="2427"/>
        <end position="2433"/>
    </location>
</feature>
<feature type="helix" evidence="13">
    <location>
        <begin position="2447"/>
        <end position="2459"/>
    </location>
</feature>
<feature type="helix" evidence="13">
    <location>
        <begin position="2465"/>
        <end position="2476"/>
    </location>
</feature>
<feature type="helix" evidence="13">
    <location>
        <begin position="2482"/>
        <end position="2491"/>
    </location>
</feature>
<feature type="helix" evidence="13">
    <location>
        <begin position="2496"/>
        <end position="2501"/>
    </location>
</feature>
<feature type="strand" evidence="13">
    <location>
        <begin position="2505"/>
        <end position="2509"/>
    </location>
</feature>
<organismHost>
    <name type="scientific">Anopheles</name>
    <dbReference type="NCBI Taxonomy" id="44482"/>
</organismHost>
<organismHost>
    <name type="scientific">Homo sapiens</name>
    <name type="common">Human</name>
    <dbReference type="NCBI Taxonomy" id="9606"/>
</organismHost>
<name>POLN_ONNVS</name>
<reference key="1">
    <citation type="journal article" date="1998" name="Virology">
        <title>Emergence of epidemic O'nyong-nyong fever in Uganda after a 35-year absence: genetic characterization of the virus.</title>
        <authorList>
            <person name="Lanciotti R.S."/>
            <person name="Ludwig M.L."/>
            <person name="Rwaguma E.B."/>
            <person name="Lutwama J.J."/>
            <person name="Kram T.M."/>
            <person name="Karabatsos N."/>
            <person name="Cropp B.C."/>
            <person name="Miller B.R."/>
        </authorList>
    </citation>
    <scope>NUCLEOTIDE SEQUENCE [GENOMIC RNA]</scope>
    <scope>READTHROUGH</scope>
</reference>
<reference key="2">
    <citation type="journal article" date="2006" name="J. Virol.">
        <title>Effects of an opal termination codon preceding the nsP4 gene sequence in the O'Nyong-Nyong virus genome on Anopheles gambiae infectivity.</title>
        <authorList>
            <person name="Myles K.M."/>
            <person name="Kelly C.L."/>
            <person name="Ledermann J.P."/>
            <person name="Powers A.M."/>
        </authorList>
    </citation>
    <scope>READTHROUGH</scope>
</reference>
<proteinExistence type="evidence at protein level"/>
<sequence length="2513" mass="280222">MDSVYVDIDADSAFLKALQRAYPMFEVEPKQVTPNDHANARAFSHLAIKLIEQEIDPDSTILDIGPAPARRMMSDRKYHCVCPMRSAEDPERLANYARKLASAAGKVTDKNISGKINDLQAVMAVPNMETSTFCLHTDATCKQRGDVAIYQDVYAVHAPTSLYHQAIKGVRVAYWIGFDTTPFMYNAMAGAYPSYSTNWADEQVLKAKNIGLCSTDLSEGRRGKLSIMRGKKLKPCDRVLFSVGSTLYPESRKLLQSWHLPSVFHLKGKLSFTCRCDTIVSCEGYVVKRVTMSPGIYGKTSGYAVTHHADGFLMCKTTDTVDGERVSFSVCTYVPATICDQMTGILATEVTPEDAQKLLVGLNQRIVVNGRTQRNTNTMKNYLLPIVAQAFSKWAKECRKDMEDEKLLGVRERTLTCCCLWAFRKHKTHTVYKRPDTQSIQKVPAEFDSFVIPSLWSSGLSIPLRTRIKWLLSKAPKHEQLPHSGNAEEAAQAEMDAAEEREAELTREAMPPLQATQDDVQVEIDVEQLEDRAGAGIVETPRGAIKVTAQPSDRVVGEYLVLTPQAVLRSQKLSLIHALAEQVKTCTHSGRAGRYAVEAYDGRVLVPSGYAIPQEDFQSLSESATMVFNEREFVNRKLHHIAMHGPALNTDEESYELVRVEKTEHEYVYDVDQKKCCKREEATGLVLVGDLTSPPYHEFAYEGLKIRPACPYKTAVIGVFGVPGSGKSAIIKNLVTRQDLVTSGKKENCQEISNDVMRQRKLEISARTVDSLLLNGCNKPVEVLYVDEAFACHSGTLLALIAMVRPRQKVVLCGDPKQCGFFNMMQMKVNYNHNICTQVYHKSISRRCTLPVTAIVSSLHYESKMRTTNEYNQPIVVDTTGITKPEPGDLVLTCFRGWVKQLQIDYRGNEVMTAAASQGLTRKGVYAVRQKVNENPLYASTSEHVNVLLTRTEGKLIWKTLSGDPWIKILQNPPKGNFKATIKEWEAEHASIMAGICNHQMAFDTFQNKANVCWAKCLVPILDTAGIKLSDRQWSQIVQAFKEDRAYSPEVALNEICTRIYGVDLDSGLFSKPLISVYYADNHWDNRPGGKMFGFNPEVALMLEKKYPFTKGKWNINKQICITTRKVDEFNPETNIIPANRRLPHSLVAEHHTVRGERMEWLVNKINGHHMLLVSGYNLILPTKRVTWVAPLGTRGADYTYNLELGLPATLGRYDLVVINIHTPFRIHHYQQCVDHAMKLQMLGGDSLRLLKPGGSLLIRAYGYADRTSERVISVLGRKFRSSRALKPQCITSNTEMFFLFSRFDNGRRNFTTHVMNNQLNAVYAGLATRAGCAPSYRVKRMDIAKNTEECVVNAANPRGVPGDGVCKAVYRKWPESFRNSATPVGTAKTIMCGQYPVIHAVGPNFSNYSEAEGDRELASVYREVAKEVSRLGVSSVAIPLLSTGVYSGGKDRLLQSLNHLFTAMDSTDADVVIYCRDKEWEKKITEAISLRSQVELLDDHISVDCDIVRVHPDSSLAGRKGYSTVEGALYSYLEGTRFHQTAVDMAEIYTMWPKQTEANEQVCLYALGESIESVRQKCPVDDADASFPPKTVPCLCRYAMTPERVARLRMNHTTSIIVCSSFPLPKYKIEGVQKVKCSKALLFDHNVPSRVSPRTYRPADEIIQTPQIPTEACQDAQFVQSITDEAVPVPSDLEACDATMDWPSIDIVPTRQRSDSFDSEYSSRSNIQLVTADVHAPMYANSLASSGGSVLSLSSEQAQNGIMILPDSEDTDSISRVSTPIAPPRRRLGRTINVTCDEREGKILPMASDRLFTAKPYTVALGVSTADITAYPIQAPLGSTQPPALEQITFGDFAEGEIDNLLTGALTFGDFEPGEVEELTDSEWSTCSDTDEELXLDRAGGYIFSSDTGQGHLQQKSVRQTTLPVNIVEEVHEEKCYPPKLDEIKEQLLLKRLQESASTANRSRYQSRKVENMKATIIHRLKEGCRLYLASDTPRVPSYRITYPAPVYSPSISIKLNNPETAVAVCNEFLARNYPTVASYQVTDEYDAYLDMVDGSESCLDRATFNPSKLRSYPKQHSYHAPTIRSAVPSPFQNTLQNVLAAATKRNCNVTQMRELPTMDSAVFNVECFKKYACNQEYWREFASSPIRVTTENLTMYVTKLKGPKAAALFAKTHNLLPLQEVPMDRFTMDMKRDVKVTPGTKHTEERPKVQVIQAAEPLATAYLCGIHRELVRRLNAVLLPNVHTLFDMSAEDFDAIISTHFKPGDAVLETDIASFDKSQDDSLALTAMMLLEDLGVDQPILDLIEAAFGEISSCHLPTGTRFKFGAMMKSGMFLTLFVNTLLNITIASRVLEERLTTSACAAFIGDDNIIHGVVSDALMAARCATWMNMEVKIIDAVVSEKAPYFCGGFILHDTVTGTSCRVADPLKRLFKLGKPLAAGDEQDEDRRRALADEVTRWQRTGLITELEKAVYSRYEVQGITAVITSMATFASSKENFKKLRGPVVTLYGGPK</sequence>
<dbReference type="EC" id="2.1.1.-" evidence="3"/>
<dbReference type="EC" id="2.7.7.-" evidence="1"/>
<dbReference type="EC" id="3.4.22.-" evidence="5"/>
<dbReference type="EC" id="3.6.1.15" evidence="5"/>
<dbReference type="EC" id="3.6.1.74" evidence="2"/>
<dbReference type="EC" id="3.6.4.13" evidence="5"/>
<dbReference type="EC" id="3.1.3.84" evidence="12 5"/>
<dbReference type="EC" id="2.7.7.19" evidence="1"/>
<dbReference type="EC" id="2.7.7.48" evidence="6"/>
<dbReference type="EMBL" id="AF079456">
    <property type="protein sequence ID" value="AAC97204.1"/>
    <property type="molecule type" value="Genomic_RNA"/>
</dbReference>
<dbReference type="PDB" id="7Y38">
    <property type="method" value="EM"/>
    <property type="resolution" value="2.80 A"/>
    <property type="chains" value="X=1903-2513"/>
</dbReference>
<dbReference type="PDBsum" id="7Y38"/>
<dbReference type="EMDB" id="EMD-33591"/>
<dbReference type="SMR" id="O90368"/>
<dbReference type="IntAct" id="O90368">
    <property type="interactions" value="3"/>
</dbReference>
<dbReference type="MEROPS" id="C09.001"/>
<dbReference type="Proteomes" id="UP000007787">
    <property type="component" value="Segment"/>
</dbReference>
<dbReference type="GO" id="GO:0044162">
    <property type="term" value="C:host cell cytoplasmic vesicle membrane"/>
    <property type="evidence" value="ECO:0007669"/>
    <property type="project" value="UniProtKB-SubCell"/>
</dbReference>
<dbReference type="GO" id="GO:0044176">
    <property type="term" value="C:host cell filopodium"/>
    <property type="evidence" value="ECO:0007669"/>
    <property type="project" value="UniProtKB-SubCell"/>
</dbReference>
<dbReference type="GO" id="GO:0042025">
    <property type="term" value="C:host cell nucleus"/>
    <property type="evidence" value="ECO:0007669"/>
    <property type="project" value="UniProtKB-SubCell"/>
</dbReference>
<dbReference type="GO" id="GO:0020002">
    <property type="term" value="C:host cell plasma membrane"/>
    <property type="evidence" value="ECO:0007669"/>
    <property type="project" value="UniProtKB-SubCell"/>
</dbReference>
<dbReference type="GO" id="GO:0016020">
    <property type="term" value="C:membrane"/>
    <property type="evidence" value="ECO:0007669"/>
    <property type="project" value="UniProtKB-KW"/>
</dbReference>
<dbReference type="GO" id="GO:0005524">
    <property type="term" value="F:ATP binding"/>
    <property type="evidence" value="ECO:0007669"/>
    <property type="project" value="UniProtKB-KW"/>
</dbReference>
<dbReference type="GO" id="GO:0016887">
    <property type="term" value="F:ATP hydrolysis activity"/>
    <property type="evidence" value="ECO:0007669"/>
    <property type="project" value="RHEA"/>
</dbReference>
<dbReference type="GO" id="GO:0008234">
    <property type="term" value="F:cysteine-type peptidase activity"/>
    <property type="evidence" value="ECO:0007669"/>
    <property type="project" value="UniProtKB-KW"/>
</dbReference>
<dbReference type="GO" id="GO:0005525">
    <property type="term" value="F:GTP binding"/>
    <property type="evidence" value="ECO:0007669"/>
    <property type="project" value="UniProtKB-KW"/>
</dbReference>
<dbReference type="GO" id="GO:0046872">
    <property type="term" value="F:metal ion binding"/>
    <property type="evidence" value="ECO:0007669"/>
    <property type="project" value="UniProtKB-KW"/>
</dbReference>
<dbReference type="GO" id="GO:0140818">
    <property type="term" value="F:mRNA 5'-triphosphate monophosphatase activity"/>
    <property type="evidence" value="ECO:0007669"/>
    <property type="project" value="RHEA"/>
</dbReference>
<dbReference type="GO" id="GO:0008174">
    <property type="term" value="F:mRNA methyltransferase activity"/>
    <property type="evidence" value="ECO:0007669"/>
    <property type="project" value="InterPro"/>
</dbReference>
<dbReference type="GO" id="GO:1990817">
    <property type="term" value="F:poly(A) RNA polymerase activity"/>
    <property type="evidence" value="ECO:0007669"/>
    <property type="project" value="UniProtKB-EC"/>
</dbReference>
<dbReference type="GO" id="GO:0004651">
    <property type="term" value="F:polynucleotide 5'-phosphatase activity"/>
    <property type="evidence" value="ECO:0007669"/>
    <property type="project" value="UniProtKB-EC"/>
</dbReference>
<dbReference type="GO" id="GO:0003723">
    <property type="term" value="F:RNA binding"/>
    <property type="evidence" value="ECO:0007669"/>
    <property type="project" value="UniProtKB-KW"/>
</dbReference>
<dbReference type="GO" id="GO:0003724">
    <property type="term" value="F:RNA helicase activity"/>
    <property type="evidence" value="ECO:0007669"/>
    <property type="project" value="UniProtKB-EC"/>
</dbReference>
<dbReference type="GO" id="GO:0003968">
    <property type="term" value="F:RNA-directed RNA polymerase activity"/>
    <property type="evidence" value="ECO:0007669"/>
    <property type="project" value="UniProtKB-KW"/>
</dbReference>
<dbReference type="GO" id="GO:0006370">
    <property type="term" value="P:7-methylguanosine mRNA capping"/>
    <property type="evidence" value="ECO:0007669"/>
    <property type="project" value="UniProtKB-KW"/>
</dbReference>
<dbReference type="GO" id="GO:0006351">
    <property type="term" value="P:DNA-templated transcription"/>
    <property type="evidence" value="ECO:0007669"/>
    <property type="project" value="InterPro"/>
</dbReference>
<dbReference type="GO" id="GO:0032259">
    <property type="term" value="P:methylation"/>
    <property type="evidence" value="ECO:0007669"/>
    <property type="project" value="UniProtKB-KW"/>
</dbReference>
<dbReference type="GO" id="GO:0016556">
    <property type="term" value="P:mRNA modification"/>
    <property type="evidence" value="ECO:0007669"/>
    <property type="project" value="InterPro"/>
</dbReference>
<dbReference type="GO" id="GO:0006508">
    <property type="term" value="P:proteolysis"/>
    <property type="evidence" value="ECO:0007669"/>
    <property type="project" value="UniProtKB-KW"/>
</dbReference>
<dbReference type="GO" id="GO:0039657">
    <property type="term" value="P:symbiont-mediated suppression of host gene expression"/>
    <property type="evidence" value="ECO:0007669"/>
    <property type="project" value="UniProtKB-KW"/>
</dbReference>
<dbReference type="GO" id="GO:0039523">
    <property type="term" value="P:symbiont-mediated suppression of host mRNA transcription via inhibition of RNA polymerase II activity"/>
    <property type="evidence" value="ECO:0007669"/>
    <property type="project" value="UniProtKB-KW"/>
</dbReference>
<dbReference type="GO" id="GO:0039694">
    <property type="term" value="P:viral RNA genome replication"/>
    <property type="evidence" value="ECO:0007669"/>
    <property type="project" value="InterPro"/>
</dbReference>
<dbReference type="CDD" id="cd21557">
    <property type="entry name" value="Macro_X_Nsp3-like"/>
    <property type="match status" value="1"/>
</dbReference>
<dbReference type="CDD" id="cd23250">
    <property type="entry name" value="Togaviridae_RdRp"/>
    <property type="match status" value="1"/>
</dbReference>
<dbReference type="FunFam" id="3.40.220.10:FF:000015">
    <property type="entry name" value="Polyprotein P1234"/>
    <property type="match status" value="1"/>
</dbReference>
<dbReference type="FunFam" id="3.40.50.150:FF:000323">
    <property type="entry name" value="Polyprotein P1234"/>
    <property type="match status" value="1"/>
</dbReference>
<dbReference type="FunFam" id="3.40.50.300:FF:001403">
    <property type="entry name" value="Polyprotein P1234"/>
    <property type="match status" value="1"/>
</dbReference>
<dbReference type="FunFam" id="3.40.50.300:FF:001415">
    <property type="entry name" value="Polyprotein P1234"/>
    <property type="match status" value="1"/>
</dbReference>
<dbReference type="Gene3D" id="3.90.70.110">
    <property type="entry name" value="Alphavirus nsP2 protease domain"/>
    <property type="match status" value="1"/>
</dbReference>
<dbReference type="Gene3D" id="3.40.220.10">
    <property type="entry name" value="Leucine Aminopeptidase, subunit E, domain 1"/>
    <property type="match status" value="1"/>
</dbReference>
<dbReference type="Gene3D" id="3.40.50.300">
    <property type="entry name" value="P-loop containing nucleotide triphosphate hydrolases"/>
    <property type="match status" value="2"/>
</dbReference>
<dbReference type="Gene3D" id="3.40.50.150">
    <property type="entry name" value="Vaccinia Virus protein VP39"/>
    <property type="match status" value="1"/>
</dbReference>
<dbReference type="InterPro" id="IPR027351">
    <property type="entry name" value="(+)RNA_virus_helicase_core_dom"/>
</dbReference>
<dbReference type="InterPro" id="IPR002588">
    <property type="entry name" value="Alphavirus-like_MT_dom"/>
</dbReference>
<dbReference type="InterPro" id="IPR002620">
    <property type="entry name" value="Alphavirus_nsp2pro"/>
</dbReference>
<dbReference type="InterPro" id="IPR044936">
    <property type="entry name" value="Alphavirus_nsp2pro_sf"/>
</dbReference>
<dbReference type="InterPro" id="IPR043502">
    <property type="entry name" value="DNA/RNA_pol_sf"/>
</dbReference>
<dbReference type="InterPro" id="IPR002589">
    <property type="entry name" value="Macro_dom"/>
</dbReference>
<dbReference type="InterPro" id="IPR043472">
    <property type="entry name" value="Macro_dom-like"/>
</dbReference>
<dbReference type="InterPro" id="IPR044371">
    <property type="entry name" value="Macro_X_NSP3-like"/>
</dbReference>
<dbReference type="InterPro" id="IPR048891">
    <property type="entry name" value="nsP3_ZBD"/>
</dbReference>
<dbReference type="InterPro" id="IPR027417">
    <property type="entry name" value="P-loop_NTPase"/>
</dbReference>
<dbReference type="InterPro" id="IPR001788">
    <property type="entry name" value="RNA-dep_RNA_pol_alsuvir"/>
</dbReference>
<dbReference type="InterPro" id="IPR007094">
    <property type="entry name" value="RNA-dir_pol_PSvirus"/>
</dbReference>
<dbReference type="InterPro" id="IPR029063">
    <property type="entry name" value="SAM-dependent_MTases_sf"/>
</dbReference>
<dbReference type="InterPro" id="IPR047311">
    <property type="entry name" value="Togaviridae_RdRp"/>
</dbReference>
<dbReference type="InterPro" id="IPR049329">
    <property type="entry name" value="ToMV_Hel_N"/>
</dbReference>
<dbReference type="Pfam" id="PF01661">
    <property type="entry name" value="Macro"/>
    <property type="match status" value="1"/>
</dbReference>
<dbReference type="Pfam" id="PF20852">
    <property type="entry name" value="nsP3_ZBD"/>
    <property type="match status" value="1"/>
</dbReference>
<dbReference type="Pfam" id="PF01707">
    <property type="entry name" value="Peptidase_C9"/>
    <property type="match status" value="1"/>
</dbReference>
<dbReference type="Pfam" id="PF00978">
    <property type="entry name" value="RdRP_2"/>
    <property type="match status" value="1"/>
</dbReference>
<dbReference type="Pfam" id="PF20896">
    <property type="entry name" value="ToMV_Hel_N"/>
    <property type="match status" value="1"/>
</dbReference>
<dbReference type="Pfam" id="PF01443">
    <property type="entry name" value="Viral_helicase1"/>
    <property type="match status" value="1"/>
</dbReference>
<dbReference type="Pfam" id="PF01660">
    <property type="entry name" value="Vmethyltransf"/>
    <property type="match status" value="1"/>
</dbReference>
<dbReference type="SMART" id="SM00506">
    <property type="entry name" value="A1pp"/>
    <property type="match status" value="1"/>
</dbReference>
<dbReference type="SUPFAM" id="SSF56672">
    <property type="entry name" value="DNA/RNA polymerases"/>
    <property type="match status" value="1"/>
</dbReference>
<dbReference type="SUPFAM" id="SSF52949">
    <property type="entry name" value="Macro domain-like"/>
    <property type="match status" value="1"/>
</dbReference>
<dbReference type="SUPFAM" id="SSF52540">
    <property type="entry name" value="P-loop containing nucleoside triphosphate hydrolases"/>
    <property type="match status" value="1"/>
</dbReference>
<dbReference type="PROSITE" id="PS51743">
    <property type="entry name" value="ALPHAVIRUS_MT"/>
    <property type="match status" value="1"/>
</dbReference>
<dbReference type="PROSITE" id="PS51154">
    <property type="entry name" value="MACRO"/>
    <property type="match status" value="1"/>
</dbReference>
<dbReference type="PROSITE" id="PS51520">
    <property type="entry name" value="NSP2PRO"/>
    <property type="match status" value="1"/>
</dbReference>
<dbReference type="PROSITE" id="PS51657">
    <property type="entry name" value="PSRV_HELICASE"/>
    <property type="match status" value="1"/>
</dbReference>
<dbReference type="PROSITE" id="PS50507">
    <property type="entry name" value="RDRP_SSRNA_POS"/>
    <property type="match status" value="1"/>
</dbReference>
<organism>
    <name type="scientific">O'nyong-nyong virus (strain SG650)</name>
    <name type="common">ONNV</name>
    <dbReference type="NCBI Taxonomy" id="374989"/>
    <lineage>
        <taxon>Viruses</taxon>
        <taxon>Riboviria</taxon>
        <taxon>Orthornavirae</taxon>
        <taxon>Kitrinoviricota</taxon>
        <taxon>Alsuviricetes</taxon>
        <taxon>Martellivirales</taxon>
        <taxon>Togaviridae</taxon>
        <taxon>Alphavirus</taxon>
        <taxon>Onyong-nyong virus</taxon>
    </lineage>
</organism>
<comment type="function">
    <molecule>Polyprotein P1234</molecule>
    <text evidence="5">Inactive precursor of the viral replicase, which is activated by cleavages carried out by the viral protease nsP2.</text>
</comment>
<comment type="function">
    <molecule>Polyprotein P123'</molecule>
    <text evidence="12">The early replication complex formed by the polyprotein P123' and nsP4 synthesizes minus-strand RNAs (Probable). Polyprotein P123' is a short-lived polyprotein that accumulates during early stage of infection (Probable). As soon P123' is cleaved into mature proteins, the plus-strand RNAs synthesis begins (Probable).</text>
</comment>
<comment type="function">
    <molecule>Polyprotein P123</molecule>
    <text evidence="1">The early replication complex formed by the polyprotein P123 and nsP4 synthesizes minus-strand RNAs (By similarity). As soon P123 is cleaved into mature proteins, the plus-strand RNAs synthesis begins (By similarity).</text>
</comment>
<comment type="function">
    <molecule>mRNA-capping enzyme nsP1</molecule>
    <text evidence="1 2 3 5 12">Cytoplasmic capping enzyme that catalyzes two virus-specific reactions: methyltransferase and nsP1 guanylyltransferase (By similarity). mRNA-capping is necessary since all viral RNAs are synthesized in the cytoplasm, and host capping enzymes are restricted to the nucleus (Probable). The enzymatic reaction involves a covalent link between 7-methyl-GMP and nsP1, whereas eukaryotic capping enzymes form a covalent complex only with GMP (Probable). nsP1 capping consists in the following reactions: GTP is first methylated into 7-methyl-GMP and then is covalently linked to nsP1 to form the m7GMp-nsP1 complex from which 7-methyl-GMP complex is transferred to the mRNA to create the cap structure (By similarity). NsP1 is also needed for the initiation of the minus-strand RNAs synthesis (By similarity). Probably serves as a membrane anchor for the replication complex composed of nsP1-nsP4 (By similarity). Palmitoylated nsP1 is remodeling host cell cytoskeleton, and induces filopodium-like structure formation at the surface of the host cell (By similarity).</text>
</comment>
<comment type="function">
    <molecule>Protease nsP2</molecule>
    <text evidence="1 2 5">Multifunctional protein whose N-terminus is part of the RNA polymerase complex and displays NTPase, RNA triphosphatase and helicase activities (By similarity). NTPase and RNA triphosphatase are involved in viral RNA capping and helicase keeps a check on the dsRNA replication intermediates (By similarity). The C-terminus harbors a protease that specifically cleaves the polyproteins and releases the mature proteins (By similarity). Required for the shutoff of minus-strand RNAs synthesis (By similarity). Specifically inhibits the host IFN response by promoting the nuclear export of host STAT1 (By similarity). Also inhibits host transcription by inducing the rapid proteasome-dependent degradation of POLR2A, a catalytic subunit of the RNAPII complex (By similarity). The resulting inhibition of cellular protein synthesis serves to ensure maximal viral gene expression and to evade host immune response (By similarity).</text>
</comment>
<comment type="function">
    <molecule>Non-structural protein 3'</molecule>
    <text evidence="1 12">Seems to be essential for minus-strand RNAs and subgenomic 26S mRNAs synthesis (By similarity). Displays mono-ADP-ribosylhydrolase activity (Probable). ADP-ribosylation is a post-translational modification that controls various processes of the host cell and the virus probably needs to revert it for optimal viral replication (Probable). Binds proteins of FXR family and sequesters them into the viral RNA replication complexes thereby inhibiting the formation of host stress granules on viral mRNAs (Probable). The nsp3'-FXR complexes bind viral RNAs and probably orchestrate the assembly of viral replication complexes, thanks to the ability of FXR family members to self-assemble and bind DNA (Probable).</text>
</comment>
<comment type="function">
    <molecule>Non-structural protein 3</molecule>
    <text evidence="1 5">Seems to be essential for minus-strand RNAs and subgenomic 26S mRNAs synthesis (By similarity). Displays mono-ADP-ribosylhydrolase activity (By similarity). ADP-ribosylation is a post-translational modification that controls various processes of the host cell and the virus probably needs to revert it for optimal viral replication (By similarity). Binds proteins of G3BP family and sequesters them into the viral RNA replication complexes thereby inhibiting the formation of host stress granules on viral mRNAs (By similarity). The nsp3-G3BP complexes bind viral RNAs and probably orchestrate the assembly of viral replication complexes, thanks to the ability of G3BP family members to self-assemble and bind DNA (By similarity).</text>
</comment>
<comment type="function">
    <molecule>RNA-directed RNA polymerase nsP4</molecule>
    <text evidence="1">RNA dependent RNA polymerase (By similarity). Replicates genomic and antigenomic RNA by recognizing replications specific signals. The early replication complex formed by the polyprotein P123 and nsP4 synthesizes minus-strand RNAs (By similarity). The late replication complex composed of fully processed nsP1-nsP4 is responsible for the production of genomic and subgenomic plus-strand RNAs (By similarity).</text>
</comment>
<comment type="catalytic activity">
    <reaction evidence="3">
        <text>GTP + S-adenosyl-L-methionine = N(7)-methyl-GTP + S-adenosyl-L-homocysteine</text>
        <dbReference type="Rhea" id="RHEA:46948"/>
        <dbReference type="ChEBI" id="CHEBI:37565"/>
        <dbReference type="ChEBI" id="CHEBI:57856"/>
        <dbReference type="ChEBI" id="CHEBI:59789"/>
        <dbReference type="ChEBI" id="CHEBI:87133"/>
    </reaction>
</comment>
<comment type="catalytic activity">
    <reaction evidence="3">
        <text>N(7)-methyl-GTP + L-histidyl-[protein] = N(tele)-(N(7)-methylguanosine 5'-phospho)-L-histidyl-[protein] + diphosphate</text>
        <dbReference type="Rhea" id="RHEA:54792"/>
        <dbReference type="Rhea" id="RHEA-COMP:9745"/>
        <dbReference type="Rhea" id="RHEA-COMP:13995"/>
        <dbReference type="ChEBI" id="CHEBI:29979"/>
        <dbReference type="ChEBI" id="CHEBI:33019"/>
        <dbReference type="ChEBI" id="CHEBI:87133"/>
        <dbReference type="ChEBI" id="CHEBI:138334"/>
    </reaction>
    <physiologicalReaction direction="left-to-right" evidence="3">
        <dbReference type="Rhea" id="RHEA:54793"/>
    </physiologicalReaction>
</comment>
<comment type="catalytic activity">
    <reaction evidence="3">
        <text>N(tele)-(N(7)-methylguanosine 5'-phospho)-L-histidyl-[protein] + a 5'-end diphospho-(purine-ribonucleoside) in mRNA + H(+) = a 5'-end (N(7)-methyl 5'-triphosphoguanosine)-(purine-ribonucleoside) in mRNA + L-histidyl-[protein]</text>
        <dbReference type="Rhea" id="RHEA:54800"/>
        <dbReference type="Rhea" id="RHEA-COMP:9745"/>
        <dbReference type="Rhea" id="RHEA-COMP:12925"/>
        <dbReference type="Rhea" id="RHEA-COMP:13929"/>
        <dbReference type="Rhea" id="RHEA-COMP:13995"/>
        <dbReference type="ChEBI" id="CHEBI:15378"/>
        <dbReference type="ChEBI" id="CHEBI:29979"/>
        <dbReference type="ChEBI" id="CHEBI:133968"/>
        <dbReference type="ChEBI" id="CHEBI:138276"/>
        <dbReference type="ChEBI" id="CHEBI:138334"/>
    </reaction>
</comment>
<comment type="catalytic activity">
    <reaction evidence="2">
        <text>a 5'-end triphospho-ribonucleoside in mRNA + H2O = a 5'-end diphospho-ribonucleoside in mRNA + phosphate + H(+)</text>
        <dbReference type="Rhea" id="RHEA:67004"/>
        <dbReference type="Rhea" id="RHEA-COMP:17164"/>
        <dbReference type="Rhea" id="RHEA-COMP:17165"/>
        <dbReference type="ChEBI" id="CHEBI:15377"/>
        <dbReference type="ChEBI" id="CHEBI:15378"/>
        <dbReference type="ChEBI" id="CHEBI:43474"/>
        <dbReference type="ChEBI" id="CHEBI:167616"/>
        <dbReference type="ChEBI" id="CHEBI:167618"/>
        <dbReference type="EC" id="3.6.1.74"/>
    </reaction>
    <physiologicalReaction direction="left-to-right" evidence="2">
        <dbReference type="Rhea" id="RHEA:67005"/>
    </physiologicalReaction>
</comment>
<comment type="catalytic activity">
    <reaction evidence="5">
        <text>a ribonucleoside 5'-triphosphate + H2O = a ribonucleoside 5'-diphosphate + phosphate + H(+)</text>
        <dbReference type="Rhea" id="RHEA:23680"/>
        <dbReference type="ChEBI" id="CHEBI:15377"/>
        <dbReference type="ChEBI" id="CHEBI:15378"/>
        <dbReference type="ChEBI" id="CHEBI:43474"/>
        <dbReference type="ChEBI" id="CHEBI:57930"/>
        <dbReference type="ChEBI" id="CHEBI:61557"/>
        <dbReference type="EC" id="3.6.1.15"/>
    </reaction>
</comment>
<comment type="catalytic activity">
    <reaction evidence="5">
        <text>ATP + H2O = ADP + phosphate + H(+)</text>
        <dbReference type="Rhea" id="RHEA:13065"/>
        <dbReference type="ChEBI" id="CHEBI:15377"/>
        <dbReference type="ChEBI" id="CHEBI:15378"/>
        <dbReference type="ChEBI" id="CHEBI:30616"/>
        <dbReference type="ChEBI" id="CHEBI:43474"/>
        <dbReference type="ChEBI" id="CHEBI:456216"/>
        <dbReference type="EC" id="3.6.4.13"/>
    </reaction>
</comment>
<comment type="catalytic activity">
    <reaction evidence="6">
        <text>RNA(n) + a ribonucleoside 5'-triphosphate = RNA(n+1) + diphosphate</text>
        <dbReference type="Rhea" id="RHEA:21248"/>
        <dbReference type="Rhea" id="RHEA-COMP:14527"/>
        <dbReference type="Rhea" id="RHEA-COMP:17342"/>
        <dbReference type="ChEBI" id="CHEBI:33019"/>
        <dbReference type="ChEBI" id="CHEBI:61557"/>
        <dbReference type="ChEBI" id="CHEBI:140395"/>
        <dbReference type="EC" id="2.7.7.48"/>
    </reaction>
</comment>
<comment type="catalytic activity">
    <reaction evidence="5">
        <text>4-O-(ADP-D-ribosyl)-L-aspartyl-[protein] + H2O = L-aspartyl-[protein] + ADP-D-ribose + H(+)</text>
        <dbReference type="Rhea" id="RHEA:54428"/>
        <dbReference type="Rhea" id="RHEA-COMP:9867"/>
        <dbReference type="Rhea" id="RHEA-COMP:13832"/>
        <dbReference type="ChEBI" id="CHEBI:15377"/>
        <dbReference type="ChEBI" id="CHEBI:15378"/>
        <dbReference type="ChEBI" id="CHEBI:29961"/>
        <dbReference type="ChEBI" id="CHEBI:57967"/>
        <dbReference type="ChEBI" id="CHEBI:138102"/>
    </reaction>
    <physiologicalReaction direction="left-to-right" evidence="5">
        <dbReference type="Rhea" id="RHEA:54429"/>
    </physiologicalReaction>
</comment>
<comment type="catalytic activity">
    <reaction evidence="5">
        <text>5-O-(ADP-D-ribosyl)-L-glutamyl-[protein] + H2O = L-glutamyl-[protein] + ADP-D-ribose + H(+)</text>
        <dbReference type="Rhea" id="RHEA:58248"/>
        <dbReference type="Rhea" id="RHEA-COMP:10208"/>
        <dbReference type="Rhea" id="RHEA-COMP:15089"/>
        <dbReference type="ChEBI" id="CHEBI:15377"/>
        <dbReference type="ChEBI" id="CHEBI:15378"/>
        <dbReference type="ChEBI" id="CHEBI:29973"/>
        <dbReference type="ChEBI" id="CHEBI:57967"/>
        <dbReference type="ChEBI" id="CHEBI:142540"/>
    </reaction>
    <physiologicalReaction direction="left-to-right" evidence="5">
        <dbReference type="Rhea" id="RHEA:58249"/>
    </physiologicalReaction>
</comment>
<comment type="catalytic activity">
    <reaction evidence="1">
        <text>RNA(n) + ATP = RNA(n)-3'-adenine ribonucleotide + diphosphate</text>
        <dbReference type="Rhea" id="RHEA:11332"/>
        <dbReference type="Rhea" id="RHEA-COMP:14527"/>
        <dbReference type="Rhea" id="RHEA-COMP:17347"/>
        <dbReference type="ChEBI" id="CHEBI:30616"/>
        <dbReference type="ChEBI" id="CHEBI:33019"/>
        <dbReference type="ChEBI" id="CHEBI:140395"/>
        <dbReference type="ChEBI" id="CHEBI:173115"/>
        <dbReference type="EC" id="2.7.7.19"/>
    </reaction>
</comment>
<comment type="catalytic activity">
    <reaction evidence="5">
        <text>ADP-alpha-D-ribose 1''-phosphate + H2O = ADP-D-ribose + phosphate</text>
        <dbReference type="Rhea" id="RHEA:25029"/>
        <dbReference type="ChEBI" id="CHEBI:15377"/>
        <dbReference type="ChEBI" id="CHEBI:43474"/>
        <dbReference type="ChEBI" id="CHEBI:57967"/>
        <dbReference type="ChEBI" id="CHEBI:58753"/>
        <dbReference type="EC" id="3.1.3.84"/>
    </reaction>
    <physiologicalReaction direction="left-to-right" evidence="5">
        <dbReference type="Rhea" id="RHEA:25030"/>
    </physiologicalReaction>
</comment>
<comment type="cofactor">
    <cofactor evidence="1">
        <name>Mg(2+)</name>
        <dbReference type="ChEBI" id="CHEBI:18420"/>
    </cofactor>
    <cofactor evidence="1">
        <name>Mn(2+)</name>
        <dbReference type="ChEBI" id="CHEBI:29035"/>
    </cofactor>
    <text evidence="1">For nsP4 adenylyltransferase activity; Mn(2+) supports catalysis at 60% of the levels observed with Mg(2+).</text>
</comment>
<comment type="cofactor">
    <cofactor>
        <name>Mg(2+)</name>
        <dbReference type="ChEBI" id="CHEBI:18420"/>
    </cofactor>
    <text evidence="1">For nsP4 RNA-directed RNA polymerase activity.</text>
</comment>
<comment type="cofactor">
    <cofactor evidence="3">
        <name>Mg(2+)</name>
        <dbReference type="ChEBI" id="CHEBI:18420"/>
    </cofactor>
    <text evidence="3">For nsP1 guanylylation.</text>
</comment>
<comment type="cofactor">
    <cofactor>
        <name>Mg(2+)</name>
        <dbReference type="ChEBI" id="CHEBI:18420"/>
    </cofactor>
    <text evidence="5">For nsP2 RNA triphosphatase activity.</text>
</comment>
<comment type="cofactor">
    <cofactor>
        <name>Mg(2+)</name>
        <dbReference type="ChEBI" id="CHEBI:18420"/>
    </cofactor>
    <text evidence="5">For nsP2 NTPase activity.</text>
</comment>
<comment type="subunit">
    <molecule>mRNA-capping enzyme nsP1</molecule>
    <text evidence="1 3 5">Interacts with non-structural protein 3 (By similarity). Interacts with RNA-directed RNA polymerase nsP4 (By similarity). Interacts with protease nsP2 (By similarity). interacts with itself (By similarity).</text>
</comment>
<comment type="subunit">
    <molecule>Non-structural protein 3</molecule>
    <text evidence="1 3 5">Interacts with mRNA-capping enzyme nsP1 (By similarity). Interacts with host DDX1 (By similarity). Interacts with host DDX3 (By similarity). Interacts (via C-terminus) with host G3BP1; this interaction inhibits the formation of host stress granules on viral mRNAs and the nsp3-G3BP1 complexes bind viral RNAs and probably orchestrate the assembly of viral replication complexes (By similarity). Interacts (via C-terminus) with host G3BP2; this interaction inhibits the formation of host stress granules on viral mRNAs and the nsp3-G3BP2 complexes bind viral RNAs and probably orchestrate the assembly of viral replication complexes (By similarity).</text>
</comment>
<comment type="subunit">
    <molecule>RNA-directed RNA polymerase nsP4</molecule>
    <text evidence="1 3 5">Interacts with mRNA-capping enzyme nsP1 (By similarity). Interacts with protease nsP2 (By similarity). interacts with itself (By similarity).</text>
</comment>
<comment type="subunit">
    <molecule>Protease nsP2</molecule>
    <text evidence="1 3 5">Interacts with RNA-directed RNA polymerase nsP4 (By similarity). Interacts with mRNA-capping enzyme nsP1 (By similarity). Interacts with KPNA1/karyopherin-alpha1; this interaction probably allows the active transport of protease nsP2 into the host nucleus (By similarity).</text>
</comment>
<comment type="subcellular location">
    <molecule>Polyprotein P1234</molecule>
    <subcellularLocation>
        <location evidence="12">Host cytoplasmic vesicle membrane</location>
        <topology evidence="12">Peripheral membrane protein</topology>
    </subcellularLocation>
    <text evidence="12">Part of cytoplasmic vesicles, which are probably formed at the plasma membrane and internalized leading to late endosomal/lysosomal spherules containing the replication complex.</text>
</comment>
<comment type="subcellular location">
    <molecule>Polyprotein P123</molecule>
    <subcellularLocation>
        <location evidence="12">Host cytoplasmic vesicle membrane</location>
        <topology evidence="12">Peripheral membrane protein</topology>
    </subcellularLocation>
    <text evidence="12">Part of cytoplasmic vesicles, which are probably formed at the plasma membrane and internalized leading to late endosomal/lysosomal spherules containing the replication complex.</text>
</comment>
<comment type="subcellular location">
    <molecule>mRNA-capping enzyme nsP1</molecule>
    <subcellularLocation>
        <location evidence="2">Host cytoplasmic vesicle membrane</location>
        <topology evidence="2">Lipid-anchor</topology>
    </subcellularLocation>
    <subcellularLocation>
        <location evidence="2">Host cell membrane</location>
        <topology evidence="2">Lipid-anchor</topology>
        <orientation evidence="2">Cytoplasmic side</orientation>
    </subcellularLocation>
    <subcellularLocation>
        <location evidence="5">Host cell projection</location>
        <location evidence="5">Host filopodium</location>
    </subcellularLocation>
    <text evidence="2 5">In the late phase of infection, the polyprotein is quickly cleaved before localization to cellular membranes. Then a fraction of nsP1 localizes to the inner surface of the plasma membrane and its filopodial extensions. Only the palmitoylated nsP1 localizes to the host filopodia (By similarity). NsP1 is also part of cytoplasmic vesicles, which are probably formed at the plasma membrane and internalized leading to late endosomal/lysosomal spherules containing the replication complex (By similarity).</text>
</comment>
<comment type="subcellular location">
    <molecule>Protease nsP2</molecule>
    <subcellularLocation>
        <location evidence="2">Host cytoplasmic vesicle membrane</location>
        <topology evidence="2">Peripheral membrane protein</topology>
    </subcellularLocation>
    <subcellularLocation>
        <location evidence="3">Host nucleus</location>
    </subcellularLocation>
    <subcellularLocation>
        <location evidence="3">Host cytoplasm</location>
    </subcellularLocation>
    <text evidence="2 3">In the late phase of infection, the polyprotein is quickly cleaved before localization to cellular membranes. Then approximately half of nsP2 is found in the nucleus (By similarity). Shuttles between cytoplasm and nucleus (By similarity). NsP2 is also part of cytoplasmic vesicles, which are probably formed at the plasma membrane and internalized leading to late endosomal/lysosomal spherules containing the replication complex (By similarity).</text>
</comment>
<comment type="subcellular location">
    <molecule>Non-structural protein 3'</molecule>
    <subcellularLocation>
        <location evidence="1">Host cytoplasmic vesicle membrane</location>
        <topology evidence="12">Peripheral membrane protein</topology>
    </subcellularLocation>
    <text evidence="1">In the late phase of infection, the polyprotein is quickly cleaved before localization to cellular membranes. Then nsP3 and nsP3' form aggregates in cytoplasm (By similarity). NsP3' is also part of cytoplasmic vesicles, which are probably formed at the plasma membrane and internalized leading to late endosomal/lysosomal spherules containing the replication complex (By similarity).</text>
</comment>
<comment type="subcellular location">
    <molecule>Non-structural protein 3</molecule>
    <subcellularLocation>
        <location evidence="1">Host cytoplasmic vesicle membrane</location>
        <topology evidence="12">Peripheral membrane protein</topology>
    </subcellularLocation>
    <text evidence="1">In the late phase of infection, the polyprotein is quickly cleaved before localization to cellular membranes. Then nsP3 and nsP3' form aggregates in cytoplasm (By similarity). NsP3 is also part of cytoplasmic vesicles, which are probably formed at the plasma membrane and internalized leading to late endosomal/lysosomal spherules containing the replication complex (By similarity).</text>
</comment>
<comment type="subcellular location">
    <molecule>RNA-directed RNA polymerase nsP4</molecule>
    <subcellularLocation>
        <location>Host cytoplasmic vesicle membrane</location>
        <topology evidence="2">Peripheral membrane protein</topology>
    </subcellularLocation>
    <text evidence="2">NsP4 is part of cytoplasmic vesicles, which are probably formed at the plasma membrane and internalized leading to late endosomal/lysosomal spherules containing the replication complex.</text>
</comment>
<comment type="domain">
    <molecule>Protease nsP2</molecule>
    <text evidence="3 5">The N-terminus exhibits NTPase and RNA triphosphatase activities and is proposed to have helicase activity, whereas the C-terminus possesses protease activity (By similarity). Contains a nuclear localization signal and a nuclear export signal, these two motifs are probably involved in the shuttling between the cytoplasm and the nucleus of nsP2 (By similarity). The C-terminus is required for promoting the export of host STAT1 (By similarity).</text>
</comment>
<comment type="domain">
    <molecule>Non-structural protein 3</molecule>
    <text evidence="1 5">In the N-terminus, the macro domain displays a mono-ADP-ribosylhydrolase activity (By similarity). The central part has a zinc-binding function (By similarity). The C-terminus contains two FGDF motifs necessary and sufficient for formation of the nsP3/G3BP1 complex (By similarity).</text>
</comment>
<comment type="domain">
    <molecule>Non-structural protein 3'</molecule>
    <text evidence="1 5">In the N-terminus, the macro domain displays a mono-ADP-ribosylhydrolase activity (By similarity). The central part has a zinc-binding function (By similarity). The C-terminus contains two FGDF motifs necessary and sufficient for formation of the nsP3'/G3BP1 complex (By similarity).</text>
</comment>
<comment type="PTM">
    <molecule>Polyprotein P1234</molecule>
    <text evidence="1">Specific enzymatic cleavages in vivo yield mature proteins (By similarity). The processing of the polyprotein is temporally regulated (By similarity). In early stages (1.7 hpi), P1234 is first cleaved in trans through its nsP2 protease activity, releasing P123' and nsP4, which associate to form the early replication complex (By similarity). At the same time, P1234 is also cut at the nsP1/nsP2 site early in infection but with lower efficiency (By similarity). After replication of the viral minus-strand RNAs (4 hpi), the polyproteins are cut at the nsP1/nsP2 and nsP2/nsP3 sites very efficiently, preventing accumulation of P123' and P1234 and allowing the formation of the late replication complex (By similarity). NsP3'/nsP4 site is not cleaved anymore and P34 is produced rather than nsP4 (By similarity).</text>
</comment>
<comment type="PTM">
    <molecule>Polyprotein P123</molecule>
    <text evidence="1">Specific enzymatic cleavages in vivo yield mature proteins (By similarity). The processing of the polyprotein is temporally regulated (By similarity). In early stages (1.7 hpi), P123 is cleaved at the nsP1/nsP2 site with low efficiency (By similarity). After replication of the viral minus-strand RNAs (4 hpi), the polyproteins are cut at the nsP1/nsP2 and nsP2/nsP3 sites very efficiently, preventing accumulation of P123 and allowing the formation of the late replication complex (By similarity).</text>
</comment>
<comment type="PTM">
    <molecule>Polyprotein P123'</molecule>
    <text evidence="1">Specific enzymatic cleavages in vivo yield mature proteins (By similarity). The processing of the polyprotein is temporally regulated (By similarity). In early stages (1.7 hpi), P123 is cleaved at the nsP1/nsP2 site with low efficiency (By similarity). After replication of the viral minus-strand RNAs (4 hpi), the polyproteins are cut at the nsP1/nsP2 and nsP2/nsP3 sites very efficiently, preventing accumulation of P123' and allowing the formation of the late replication complex (By similarity).</text>
</comment>
<comment type="PTM">
    <molecule>mRNA-capping enzyme nsP1</molecule>
    <text evidence="5">Palmitoylated by host palmitoyltransferases ZDHHC2 and ZDHHC19.</text>
</comment>
<comment type="PTM">
    <molecule>Non-structural protein 3</molecule>
    <text evidence="2">Phosphorylated by host on serines and threonines.</text>
</comment>
<comment type="PTM">
    <molecule>Non-structural protein 3'</molecule>
    <text evidence="2">Phosphorylated by host on serines and threonines.</text>
</comment>
<comment type="PTM">
    <molecule>RNA-directed RNA polymerase nsP4</molecule>
    <text evidence="1">Ubiquitinated; targets the protein for rapid degradation via the ubiquitin system (By similarity). Nsp4 is present in extremely low quantities due to low frequency of translation through the amber stop-codon and the degradation by the ubiquitin pathway (By similarity).</text>
</comment>
<comment type="miscellaneous">
    <text evidence="1">Viral replication produces dsRNA in the late phase of infection, resulting in a strong activation of host EIF2AK2/PKR, leading to almost complete phosphorylation of EIF2A (By similarity). This inactivates completely cellular translation initiation, resulting shutoff of host proteins synthesis (By similarity). However, phosphorylation of EIF2A is probably not the only mechanism responsible for the host translation shutoff (By similarity). The viral translation can still occur normally because it relies on a hairpin structure in the coding region of sgRNA and is EIF2A-, EIF2D-, EIF4G- EIF4A-independent (By similarity).</text>
</comment>
<comment type="miscellaneous">
    <text evidence="1 10 11">The genome codes for P123, but readthrough of a terminator codon UGA occurs between the codons for Leu-1895 and Leu-1897 (PubMed:9875334). This readthrough produces P1234, cleaved quickly by nsP2 into P123' and nsP4 (PubMed:9875334). Further processing of p123' gives nsP1, nsP2 and nsP3' which is 6 amino acids longer than nsP3 since the cleavage site is after the readthrough (PubMed:9875334). This unusual molecular mechanism ensures that few nsP4 are produced compared to other non-structural proteins (PubMed:9875334). Mutant viruses with no alternative termination site grow significantly slower than wild-type virus (By similarity). The opal termination codon is frequently mutated to a sense codon on passage in cell culture (PubMed:9875334). The presence of the opal codon may be a requirement for viral maintenance in both vertebrate and invertebrate hosts and a selective advantage may be conferred in cell culture for the sense codon (PubMed:16641290, PubMed:9875334).</text>
</comment>
<keyword id="KW-0002">3D-structure</keyword>
<keyword id="KW-0067">ATP-binding</keyword>
<keyword id="KW-1262">Eukaryotic host gene expression shutoff by virus</keyword>
<keyword id="KW-1191">Eukaryotic host transcription shutoff by virus</keyword>
<keyword id="KW-0342">GTP-binding</keyword>
<keyword id="KW-0347">Helicase</keyword>
<keyword id="KW-1032">Host cell membrane</keyword>
<keyword id="KW-1034">Host cell projection</keyword>
<keyword id="KW-1035">Host cytoplasm</keyword>
<keyword id="KW-1036">Host cytoplasmic vesicle</keyword>
<keyword id="KW-1190">Host gene expression shutoff by virus</keyword>
<keyword id="KW-1043">Host membrane</keyword>
<keyword id="KW-1048">Host nucleus</keyword>
<keyword id="KW-0945">Host-virus interaction</keyword>
<keyword id="KW-0378">Hydrolase</keyword>
<keyword id="KW-1104">Inhibition of host RNA polymerase II by virus</keyword>
<keyword id="KW-0449">Lipoprotein</keyword>
<keyword id="KW-0472">Membrane</keyword>
<keyword id="KW-0479">Metal-binding</keyword>
<keyword id="KW-0489">Methyltransferase</keyword>
<keyword id="KW-0506">mRNA capping</keyword>
<keyword id="KW-0507">mRNA processing</keyword>
<keyword id="KW-0511">Multifunctional enzyme</keyword>
<keyword id="KW-0547">Nucleotide-binding</keyword>
<keyword id="KW-0548">Nucleotidyltransferase</keyword>
<keyword id="KW-0564">Palmitate</keyword>
<keyword id="KW-0597">Phosphoprotein</keyword>
<keyword id="KW-0645">Protease</keyword>
<keyword id="KW-1159">RNA suppression of termination</keyword>
<keyword id="KW-0694">RNA-binding</keyword>
<keyword id="KW-0696">RNA-directed RNA polymerase</keyword>
<keyword id="KW-0949">S-adenosyl-L-methionine</keyword>
<keyword id="KW-0788">Thiol protease</keyword>
<keyword id="KW-0808">Transferase</keyword>
<keyword id="KW-0832">Ubl conjugation</keyword>
<keyword id="KW-0693">Viral RNA replication</keyword>
<keyword id="KW-0862">Zinc</keyword>
<accession>O90368</accession>
<evidence type="ECO:0000250" key="1">
    <source>
        <dbReference type="UniProtKB" id="P03317"/>
    </source>
</evidence>
<evidence type="ECO:0000250" key="2">
    <source>
        <dbReference type="UniProtKB" id="P08411"/>
    </source>
</evidence>
<evidence type="ECO:0000250" key="3">
    <source>
        <dbReference type="UniProtKB" id="P27282"/>
    </source>
</evidence>
<evidence type="ECO:0000250" key="4">
    <source>
        <dbReference type="UniProtKB" id="P36328"/>
    </source>
</evidence>
<evidence type="ECO:0000250" key="5">
    <source>
        <dbReference type="UniProtKB" id="Q8JUX6"/>
    </source>
</evidence>
<evidence type="ECO:0000255" key="6">
    <source>
        <dbReference type="PROSITE-ProRule" id="PRU00539"/>
    </source>
</evidence>
<evidence type="ECO:0000255" key="7">
    <source>
        <dbReference type="PROSITE-ProRule" id="PRU00853"/>
    </source>
</evidence>
<evidence type="ECO:0000255" key="8">
    <source>
        <dbReference type="PROSITE-ProRule" id="PRU00990"/>
    </source>
</evidence>
<evidence type="ECO:0000255" key="9">
    <source>
        <dbReference type="PROSITE-ProRule" id="PRU01079"/>
    </source>
</evidence>
<evidence type="ECO:0000269" key="10">
    <source>
    </source>
</evidence>
<evidence type="ECO:0000269" key="11">
    <source>
    </source>
</evidence>
<evidence type="ECO:0000305" key="12"/>
<evidence type="ECO:0007829" key="13">
    <source>
        <dbReference type="PDB" id="7Y38"/>
    </source>
</evidence>
<protein>
    <recommendedName>
        <fullName>Polyprotein P1234</fullName>
        <shortName>P1234</shortName>
    </recommendedName>
    <alternativeName>
        <fullName>Non-structural polyprotein</fullName>
    </alternativeName>
    <component>
        <recommendedName>
            <fullName>Polyprotein P123'</fullName>
            <shortName>P123'</shortName>
        </recommendedName>
    </component>
    <component>
        <recommendedName>
            <fullName>Polyprotein P123</fullName>
            <shortName>P123</shortName>
        </recommendedName>
    </component>
    <component>
        <recommendedName>
            <fullName>mRNA-capping enzyme nsP1</fullName>
            <ecNumber evidence="3">2.1.1.-</ecNumber>
            <ecNumber evidence="1">2.7.7.-</ecNumber>
        </recommendedName>
        <alternativeName>
            <fullName>Non-structural protein 1</fullName>
        </alternativeName>
    </component>
    <component>
        <recommendedName>
            <fullName>Protease nsP2</fullName>
            <ecNumber evidence="5">3.4.22.-</ecNumber>
            <ecNumber evidence="5">3.6.1.15</ecNumber>
            <ecNumber evidence="2">3.6.1.74</ecNumber>
            <ecNumber evidence="5">3.6.4.13</ecNumber>
        </recommendedName>
        <alternativeName>
            <fullName>Non-structural protein 2</fullName>
            <shortName>nsP2</shortName>
        </alternativeName>
    </component>
    <component>
        <recommendedName>
            <fullName>Non-structural protein 3'</fullName>
            <shortName>nsP3'</shortName>
            <ecNumber evidence="12">3.1.3.84</ecNumber>
        </recommendedName>
    </component>
    <component>
        <recommendedName>
            <fullName>Non-structural protein 3</fullName>
            <shortName>nsP3</shortName>
            <ecNumber evidence="5">3.1.3.84</ecNumber>
        </recommendedName>
    </component>
    <component>
        <recommendedName>
            <fullName>RNA-directed RNA polymerase nsP4</fullName>
            <ecNumber evidence="1">2.7.7.19</ecNumber>
            <ecNumber evidence="6">2.7.7.48</ecNumber>
        </recommendedName>
        <alternativeName>
            <fullName>Non-structural protein 4</fullName>
            <shortName>nsP4</shortName>
        </alternativeName>
    </component>
</protein>